<accession>A0A172M418</accession>
<keyword id="KW-1035">Host cytoplasm</keyword>
<keyword id="KW-1048">Host nucleus</keyword>
<keyword id="KW-0964">Secreted</keyword>
<keyword id="KW-0732">Signal</keyword>
<keyword id="KW-0843">Virulence</keyword>
<sequence>MICRSPLIVVMLFVIAAHTVLALEIATRIDASETESPVSAQMTRVSYRPITSVDNKRFLRQETTFEKKLGVNDVHAVHAEERSALGKAKILGRDLLWFMSILGRFLIPRIGRRGP</sequence>
<feature type="signal peptide" evidence="1">
    <location>
        <begin position="1"/>
        <end position="22"/>
    </location>
</feature>
<feature type="chain" id="PRO_5007999403" description="Secreted RxLR effector protein 2">
    <location>
        <begin position="23"/>
        <end position="115"/>
    </location>
</feature>
<feature type="short sequence motif" description="RxLR-dEER" evidence="6">
    <location>
        <begin position="57"/>
        <end position="82"/>
    </location>
</feature>
<evidence type="ECO:0000255" key="1"/>
<evidence type="ECO:0000269" key="2">
    <source>
    </source>
</evidence>
<evidence type="ECO:0000269" key="3">
    <source ref="2"/>
</evidence>
<evidence type="ECO:0000303" key="4">
    <source ref="2"/>
</evidence>
<evidence type="ECO:0000305" key="5"/>
<evidence type="ECO:0000305" key="6">
    <source ref="2"/>
</evidence>
<gene>
    <name evidence="4" type="primary">RxLR2</name>
</gene>
<dbReference type="EMBL" id="KX010947">
    <property type="protein sequence ID" value="ANC73367.1"/>
    <property type="molecule type" value="mRNA"/>
</dbReference>
<dbReference type="SMR" id="A0A172M418"/>
<dbReference type="GO" id="GO:0005576">
    <property type="term" value="C:extracellular region"/>
    <property type="evidence" value="ECO:0007669"/>
    <property type="project" value="UniProtKB-SubCell"/>
</dbReference>
<dbReference type="GO" id="GO:0030430">
    <property type="term" value="C:host cell cytoplasm"/>
    <property type="evidence" value="ECO:0007669"/>
    <property type="project" value="UniProtKB-SubCell"/>
</dbReference>
<dbReference type="GO" id="GO:0042025">
    <property type="term" value="C:host cell nucleus"/>
    <property type="evidence" value="ECO:0007669"/>
    <property type="project" value="UniProtKB-SubCell"/>
</dbReference>
<protein>
    <recommendedName>
        <fullName evidence="4">Secreted RxLR effector protein 2</fullName>
    </recommendedName>
</protein>
<comment type="function">
    <text evidence="2">Effector that acts as a broad suppressor of cell death to interrupt plant immunity. Inhibits cell death induced by cell death-inducing proteins, including the PAMP elicitor INF1 from P.infestans.</text>
</comment>
<comment type="subcellular location">
    <subcellularLocation>
        <location evidence="2">Secreted</location>
    </subcellularLocation>
    <subcellularLocation>
        <location evidence="2">Host cytoplasm</location>
    </subcellularLocation>
    <subcellularLocation>
        <location evidence="2">Host nucleus</location>
    </subcellularLocation>
</comment>
<comment type="induction">
    <text evidence="3">Expression is up-regulated at later stages of infection.</text>
</comment>
<comment type="domain">
    <text evidence="6">The RxLR-dEER motif acts to carry the protein into the host cell cytoplasm through binding to cell surface phosphatidylinositol-3-phosphate.</text>
</comment>
<comment type="similarity">
    <text evidence="5">Belongs to the RxLR effector family.</text>
</comment>
<name>RLR2_PLAVT</name>
<reference key="1">
    <citation type="journal article" date="2016" name="Front. Microbiol.">
        <title>Studying the mechanism of Plasmopara viticola RxLR effectors on suppressing plant immunity.</title>
        <authorList>
            <person name="Xiang J."/>
            <person name="Li X."/>
            <person name="Wu J."/>
            <person name="Yin L."/>
            <person name="Zhang Y."/>
            <person name="Lu J."/>
        </authorList>
    </citation>
    <scope>NUCLEOTIDE SEQUENCE [MRNA]</scope>
    <scope>FUNCTION</scope>
    <scope>SUBCELLULAR LOCATION</scope>
    <source>
        <strain>ZJ-1-1</strain>
    </source>
</reference>
<reference key="2">
    <citation type="journal article" date="2015" name="Physiol. Mol. Plant Pathol.">
        <title>Characterization of the secretome of Plasmopara viticola by de novo transcriptome analysis.</title>
        <authorList>
            <person name="Yin L."/>
            <person name="Li X."/>
            <person name="Xiang J."/>
            <person name="Qu J."/>
            <person name="Zhang Y."/>
            <person name="Dry I.B."/>
            <person name="Lu J."/>
        </authorList>
    </citation>
    <scope>IDENTIFICATION</scope>
    <scope>INDUCTION</scope>
    <scope>DOMAIN</scope>
</reference>
<proteinExistence type="evidence at transcript level"/>
<organism>
    <name type="scientific">Plasmopara viticola</name>
    <name type="common">Downy mildew of grapevine</name>
    <name type="synonym">Botrytis viticola</name>
    <dbReference type="NCBI Taxonomy" id="143451"/>
    <lineage>
        <taxon>Eukaryota</taxon>
        <taxon>Sar</taxon>
        <taxon>Stramenopiles</taxon>
        <taxon>Oomycota</taxon>
        <taxon>Peronosporales</taxon>
        <taxon>Peronosporaceae</taxon>
        <taxon>Plasmopara</taxon>
    </lineage>
</organism>